<protein>
    <recommendedName>
        <fullName evidence="1">Bifunctional purine biosynthesis protein PurH</fullName>
    </recommendedName>
    <domain>
        <recommendedName>
            <fullName evidence="1">Phosphoribosylaminoimidazolecarboxamide formyltransferase</fullName>
            <ecNumber evidence="1">2.1.2.3</ecNumber>
        </recommendedName>
        <alternativeName>
            <fullName evidence="1">AICAR transformylase</fullName>
        </alternativeName>
    </domain>
    <domain>
        <recommendedName>
            <fullName evidence="1">IMP cyclohydrolase</fullName>
            <ecNumber evidence="1">3.5.4.10</ecNumber>
        </recommendedName>
        <alternativeName>
            <fullName evidence="1">ATIC</fullName>
        </alternativeName>
        <alternativeName>
            <fullName evidence="1">IMP synthase</fullName>
        </alternativeName>
        <alternativeName>
            <fullName evidence="1">Inosinicase</fullName>
        </alternativeName>
    </domain>
</protein>
<sequence length="529" mass="57293">MQQRRPVRRALLSVSDKAGIVEFAQALSARGVELLSTGGTARLLAEKGLPVTEVSDYTGFPEMMDGRVKTLHPKVHGGILGRRGLDDAIMEEHQILPIDMVVVNLYPFAQTVAREGCSLEDAVENIDIGGPTMVRSAAKNHKDVAIVVKSSDYDAIIKEMDANEGSLTLATRFDLAIKAFEHTAAYDSMIANYFGSMVPAYHGESKEAAGRFPRTLNLNFIKKQDMRYGENSHQQAAFYIEENVKEASVATATQVQGKALSYNNIADTDAALECVKEFAEPACVIVKHANPCGVAIGHSILDAYDRAYKTDPTSAFGGIIAFNRELDAETAQAIISRQFVEVIIAPSASEEALKITAAKQNVRVLTCGQWGERVPGLDFKRVNGGLLVQDRDLGMVGAEELRVVTKRQPSEQELRDALFCWKVAKFVKSNAIVYAKNNMTIGIGAGQMSRVYSAKIAGIKAADEGLEVKGSSMASDAFFPFRDGIDAAAAAGVTCVIQPGGSIRDDEVIAAADEHGIAMLFTDMRHFRH</sequence>
<feature type="chain" id="PRO_0000192092" description="Bifunctional purine biosynthesis protein PurH">
    <location>
        <begin position="1"/>
        <end position="529"/>
    </location>
</feature>
<feature type="domain" description="MGS-like" evidence="2">
    <location>
        <begin position="1"/>
        <end position="148"/>
    </location>
</feature>
<feature type="modified residue" description="N6-acetyllysine" evidence="1">
    <location>
        <position position="287"/>
    </location>
</feature>
<comment type="catalytic activity">
    <reaction evidence="1">
        <text>(6R)-10-formyltetrahydrofolate + 5-amino-1-(5-phospho-beta-D-ribosyl)imidazole-4-carboxamide = 5-formamido-1-(5-phospho-D-ribosyl)imidazole-4-carboxamide + (6S)-5,6,7,8-tetrahydrofolate</text>
        <dbReference type="Rhea" id="RHEA:22192"/>
        <dbReference type="ChEBI" id="CHEBI:57453"/>
        <dbReference type="ChEBI" id="CHEBI:58467"/>
        <dbReference type="ChEBI" id="CHEBI:58475"/>
        <dbReference type="ChEBI" id="CHEBI:195366"/>
        <dbReference type="EC" id="2.1.2.3"/>
    </reaction>
</comment>
<comment type="catalytic activity">
    <reaction evidence="1">
        <text>IMP + H2O = 5-formamido-1-(5-phospho-D-ribosyl)imidazole-4-carboxamide</text>
        <dbReference type="Rhea" id="RHEA:18445"/>
        <dbReference type="ChEBI" id="CHEBI:15377"/>
        <dbReference type="ChEBI" id="CHEBI:58053"/>
        <dbReference type="ChEBI" id="CHEBI:58467"/>
        <dbReference type="EC" id="3.5.4.10"/>
    </reaction>
</comment>
<comment type="pathway">
    <text evidence="1">Purine metabolism; IMP biosynthesis via de novo pathway; 5-formamido-1-(5-phospho-D-ribosyl)imidazole-4-carboxamide from 5-amino-1-(5-phospho-D-ribosyl)imidazole-4-carboxamide (10-formyl THF route): step 1/1.</text>
</comment>
<comment type="pathway">
    <text evidence="1">Purine metabolism; IMP biosynthesis via de novo pathway; IMP from 5-formamido-1-(5-phospho-D-ribosyl)imidazole-4-carboxamide: step 1/1.</text>
</comment>
<comment type="domain">
    <text evidence="1">The IMP cyclohydrolase activity resides in the N-terminal region.</text>
</comment>
<comment type="similarity">
    <text evidence="1">Belongs to the PurH family.</text>
</comment>
<reference key="1">
    <citation type="journal article" date="2002" name="Proc. Natl. Acad. Sci. U.S.A.">
        <title>Extensive mosaic structure revealed by the complete genome sequence of uropathogenic Escherichia coli.</title>
        <authorList>
            <person name="Welch R.A."/>
            <person name="Burland V."/>
            <person name="Plunkett G. III"/>
            <person name="Redford P."/>
            <person name="Roesch P."/>
            <person name="Rasko D."/>
            <person name="Buckles E.L."/>
            <person name="Liou S.-R."/>
            <person name="Boutin A."/>
            <person name="Hackett J."/>
            <person name="Stroud D."/>
            <person name="Mayhew G.F."/>
            <person name="Rose D.J."/>
            <person name="Zhou S."/>
            <person name="Schwartz D.C."/>
            <person name="Perna N.T."/>
            <person name="Mobley H.L.T."/>
            <person name="Donnenberg M.S."/>
            <person name="Blattner F.R."/>
        </authorList>
    </citation>
    <scope>NUCLEOTIDE SEQUENCE [LARGE SCALE GENOMIC DNA]</scope>
    <source>
        <strain>CFT073 / ATCC 700928 / UPEC</strain>
    </source>
</reference>
<gene>
    <name evidence="1" type="primary">purH</name>
    <name type="ordered locus">c4964</name>
</gene>
<evidence type="ECO:0000255" key="1">
    <source>
        <dbReference type="HAMAP-Rule" id="MF_00139"/>
    </source>
</evidence>
<evidence type="ECO:0000255" key="2">
    <source>
        <dbReference type="PROSITE-ProRule" id="PRU01202"/>
    </source>
</evidence>
<proteinExistence type="inferred from homology"/>
<organism>
    <name type="scientific">Escherichia coli O6:H1 (strain CFT073 / ATCC 700928 / UPEC)</name>
    <dbReference type="NCBI Taxonomy" id="199310"/>
    <lineage>
        <taxon>Bacteria</taxon>
        <taxon>Pseudomonadati</taxon>
        <taxon>Pseudomonadota</taxon>
        <taxon>Gammaproteobacteria</taxon>
        <taxon>Enterobacterales</taxon>
        <taxon>Enterobacteriaceae</taxon>
        <taxon>Escherichia</taxon>
    </lineage>
</organism>
<name>PUR9_ECOL6</name>
<keyword id="KW-0007">Acetylation</keyword>
<keyword id="KW-0378">Hydrolase</keyword>
<keyword id="KW-0511">Multifunctional enzyme</keyword>
<keyword id="KW-0658">Purine biosynthesis</keyword>
<keyword id="KW-1185">Reference proteome</keyword>
<keyword id="KW-0808">Transferase</keyword>
<dbReference type="EC" id="2.1.2.3" evidence="1"/>
<dbReference type="EC" id="3.5.4.10" evidence="1"/>
<dbReference type="EMBL" id="AE014075">
    <property type="protein sequence ID" value="AAN83392.1"/>
    <property type="molecule type" value="Genomic_DNA"/>
</dbReference>
<dbReference type="RefSeq" id="WP_001187531.1">
    <property type="nucleotide sequence ID" value="NZ_CP051263.1"/>
</dbReference>
<dbReference type="SMR" id="Q8FB68"/>
<dbReference type="STRING" id="199310.c4964"/>
<dbReference type="KEGG" id="ecc:c4964"/>
<dbReference type="eggNOG" id="COG0138">
    <property type="taxonomic scope" value="Bacteria"/>
</dbReference>
<dbReference type="HOGENOM" id="CLU_016316_5_2_6"/>
<dbReference type="BioCyc" id="ECOL199310:C4964-MONOMER"/>
<dbReference type="UniPathway" id="UPA00074">
    <property type="reaction ID" value="UER00133"/>
</dbReference>
<dbReference type="UniPathway" id="UPA00074">
    <property type="reaction ID" value="UER00135"/>
</dbReference>
<dbReference type="Proteomes" id="UP000001410">
    <property type="component" value="Chromosome"/>
</dbReference>
<dbReference type="GO" id="GO:0005829">
    <property type="term" value="C:cytosol"/>
    <property type="evidence" value="ECO:0007669"/>
    <property type="project" value="TreeGrafter"/>
</dbReference>
<dbReference type="GO" id="GO:0003937">
    <property type="term" value="F:IMP cyclohydrolase activity"/>
    <property type="evidence" value="ECO:0007669"/>
    <property type="project" value="UniProtKB-UniRule"/>
</dbReference>
<dbReference type="GO" id="GO:0004643">
    <property type="term" value="F:phosphoribosylaminoimidazolecarboxamide formyltransferase activity"/>
    <property type="evidence" value="ECO:0007669"/>
    <property type="project" value="UniProtKB-UniRule"/>
</dbReference>
<dbReference type="GO" id="GO:0006189">
    <property type="term" value="P:'de novo' IMP biosynthetic process"/>
    <property type="evidence" value="ECO:0007669"/>
    <property type="project" value="UniProtKB-UniRule"/>
</dbReference>
<dbReference type="CDD" id="cd01421">
    <property type="entry name" value="IMPCH"/>
    <property type="match status" value="1"/>
</dbReference>
<dbReference type="FunFam" id="3.40.140.20:FF:000001">
    <property type="entry name" value="Bifunctional purine biosynthesis protein PurH"/>
    <property type="match status" value="1"/>
</dbReference>
<dbReference type="FunFam" id="3.40.140.20:FF:000002">
    <property type="entry name" value="Bifunctional purine biosynthesis protein PurH"/>
    <property type="match status" value="1"/>
</dbReference>
<dbReference type="FunFam" id="3.40.50.1380:FF:000001">
    <property type="entry name" value="Bifunctional purine biosynthesis protein PurH"/>
    <property type="match status" value="1"/>
</dbReference>
<dbReference type="Gene3D" id="3.40.140.20">
    <property type="match status" value="2"/>
</dbReference>
<dbReference type="Gene3D" id="3.40.50.1380">
    <property type="entry name" value="Methylglyoxal synthase-like domain"/>
    <property type="match status" value="1"/>
</dbReference>
<dbReference type="HAMAP" id="MF_00139">
    <property type="entry name" value="PurH"/>
    <property type="match status" value="1"/>
</dbReference>
<dbReference type="InterPro" id="IPR024051">
    <property type="entry name" value="AICAR_Tfase_dup_dom_sf"/>
</dbReference>
<dbReference type="InterPro" id="IPR016193">
    <property type="entry name" value="Cytidine_deaminase-like"/>
</dbReference>
<dbReference type="InterPro" id="IPR011607">
    <property type="entry name" value="MGS-like_dom"/>
</dbReference>
<dbReference type="InterPro" id="IPR036914">
    <property type="entry name" value="MGS-like_dom_sf"/>
</dbReference>
<dbReference type="InterPro" id="IPR002695">
    <property type="entry name" value="PurH-like"/>
</dbReference>
<dbReference type="NCBIfam" id="NF002049">
    <property type="entry name" value="PRK00881.1"/>
    <property type="match status" value="1"/>
</dbReference>
<dbReference type="NCBIfam" id="TIGR00355">
    <property type="entry name" value="purH"/>
    <property type="match status" value="1"/>
</dbReference>
<dbReference type="PANTHER" id="PTHR11692:SF0">
    <property type="entry name" value="BIFUNCTIONAL PURINE BIOSYNTHESIS PROTEIN ATIC"/>
    <property type="match status" value="1"/>
</dbReference>
<dbReference type="PANTHER" id="PTHR11692">
    <property type="entry name" value="BIFUNCTIONAL PURINE BIOSYNTHESIS PROTEIN PURH"/>
    <property type="match status" value="1"/>
</dbReference>
<dbReference type="Pfam" id="PF01808">
    <property type="entry name" value="AICARFT_IMPCHas"/>
    <property type="match status" value="1"/>
</dbReference>
<dbReference type="Pfam" id="PF02142">
    <property type="entry name" value="MGS"/>
    <property type="match status" value="1"/>
</dbReference>
<dbReference type="PIRSF" id="PIRSF000414">
    <property type="entry name" value="AICARFT_IMPCHas"/>
    <property type="match status" value="1"/>
</dbReference>
<dbReference type="SMART" id="SM00798">
    <property type="entry name" value="AICARFT_IMPCHas"/>
    <property type="match status" value="1"/>
</dbReference>
<dbReference type="SMART" id="SM00851">
    <property type="entry name" value="MGS"/>
    <property type="match status" value="1"/>
</dbReference>
<dbReference type="SUPFAM" id="SSF53927">
    <property type="entry name" value="Cytidine deaminase-like"/>
    <property type="match status" value="1"/>
</dbReference>
<dbReference type="SUPFAM" id="SSF52335">
    <property type="entry name" value="Methylglyoxal synthase-like"/>
    <property type="match status" value="1"/>
</dbReference>
<dbReference type="PROSITE" id="PS51855">
    <property type="entry name" value="MGS"/>
    <property type="match status" value="1"/>
</dbReference>
<accession>Q8FB68</accession>